<evidence type="ECO:0000250" key="1">
    <source>
        <dbReference type="UniProtKB" id="P85504"/>
    </source>
</evidence>
<evidence type="ECO:0000255" key="2"/>
<evidence type="ECO:0000269" key="3">
    <source>
    </source>
</evidence>
<evidence type="ECO:0000303" key="4">
    <source>
    </source>
</evidence>
<evidence type="ECO:0000305" key="5"/>
<evidence type="ECO:0000305" key="6">
    <source>
    </source>
</evidence>
<evidence type="ECO:0000312" key="7">
    <source>
        <dbReference type="EMBL" id="ABY71656.1"/>
    </source>
</evidence>
<accession>B1P1A6</accession>
<organism>
    <name type="scientific">Chilobrachys guangxiensis</name>
    <name type="common">Chinese earth tiger tarantula</name>
    <name type="synonym">Chilobrachys jingzhao</name>
    <dbReference type="NCBI Taxonomy" id="278060"/>
    <lineage>
        <taxon>Eukaryota</taxon>
        <taxon>Metazoa</taxon>
        <taxon>Ecdysozoa</taxon>
        <taxon>Arthropoda</taxon>
        <taxon>Chelicerata</taxon>
        <taxon>Arachnida</taxon>
        <taxon>Araneae</taxon>
        <taxon>Mygalomorphae</taxon>
        <taxon>Theraphosidae</taxon>
        <taxon>Chilobrachys</taxon>
    </lineage>
</organism>
<proteinExistence type="evidence at protein level"/>
<comment type="function">
    <text evidence="5">Probable ion channel inhibitor.</text>
</comment>
<comment type="subcellular location">
    <subcellularLocation>
        <location evidence="3">Secreted</location>
    </subcellularLocation>
</comment>
<comment type="tissue specificity">
    <text evidence="6">Expressed by the venom gland.</text>
</comment>
<comment type="PTM">
    <text>Contains 3 disulfide bonds. Two different connectivities are observed in similar proteins (C1-C3, C2-C5, C4-C6 or C1-C4, C2-C5, C3-C6).</text>
</comment>
<comment type="mass spectrometry">
    <text>Monoisotopic mass.</text>
</comment>
<comment type="similarity">
    <text evidence="5">Belongs to the neurotoxin 12 (Hwtx-2) family. 03 (juruin) subfamily.</text>
</comment>
<keyword id="KW-0903">Direct protein sequencing</keyword>
<keyword id="KW-1015">Disulfide bond</keyword>
<keyword id="KW-0872">Ion channel impairing toxin</keyword>
<keyword id="KW-0960">Knottin</keyword>
<keyword id="KW-0964">Secreted</keyword>
<keyword id="KW-0732">Signal</keyword>
<keyword id="KW-0800">Toxin</keyword>
<dbReference type="EMBL" id="EU233837">
    <property type="protein sequence ID" value="ABY71656.1"/>
    <property type="molecule type" value="mRNA"/>
</dbReference>
<dbReference type="SMR" id="B1P1A6"/>
<dbReference type="ArachnoServer" id="AS000785">
    <property type="toxin name" value="U3-theraphotoxin-Cg1a"/>
</dbReference>
<dbReference type="GO" id="GO:0005576">
    <property type="term" value="C:extracellular region"/>
    <property type="evidence" value="ECO:0007669"/>
    <property type="project" value="UniProtKB-SubCell"/>
</dbReference>
<dbReference type="GO" id="GO:0099106">
    <property type="term" value="F:ion channel regulator activity"/>
    <property type="evidence" value="ECO:0007669"/>
    <property type="project" value="UniProtKB-KW"/>
</dbReference>
<dbReference type="GO" id="GO:0090729">
    <property type="term" value="F:toxin activity"/>
    <property type="evidence" value="ECO:0007669"/>
    <property type="project" value="UniProtKB-KW"/>
</dbReference>
<dbReference type="InterPro" id="IPR012625">
    <property type="entry name" value="Hwtx-2-like"/>
</dbReference>
<dbReference type="Pfam" id="PF08089">
    <property type="entry name" value="Toxin_20"/>
    <property type="match status" value="1"/>
</dbReference>
<dbReference type="SUPFAM" id="SSF57059">
    <property type="entry name" value="omega toxin-like"/>
    <property type="match status" value="1"/>
</dbReference>
<dbReference type="PROSITE" id="PS60022">
    <property type="entry name" value="HWTX_2"/>
    <property type="match status" value="1"/>
</dbReference>
<name>JZT8A_CHIGU</name>
<reference key="1">
    <citation type="journal article" date="2008" name="Cell. Mol. Life Sci.">
        <title>Molecular diversity and evolution of cystine knot toxins of the tarantula Chilobrachys jingzhao.</title>
        <authorList>
            <person name="Chen J."/>
            <person name="Deng M."/>
            <person name="He Q."/>
            <person name="Meng E."/>
            <person name="Jiang L."/>
            <person name="Liao Z."/>
            <person name="Rong M."/>
            <person name="Liang S."/>
        </authorList>
    </citation>
    <scope>NUCLEOTIDE SEQUENCE [LARGE SCALE MRNA]</scope>
    <source>
        <tissue>Venom gland</tissue>
    </source>
</reference>
<reference key="2">
    <citation type="journal article" date="2007" name="Proteomics">
        <title>Proteomic and peptidomic analysis of the venom from Chinese tarantula Chilobrachys jingzhao.</title>
        <authorList>
            <person name="Liao Z."/>
            <person name="Cao J."/>
            <person name="Li S."/>
            <person name="Yan X."/>
            <person name="Hu W."/>
            <person name="He Q."/>
            <person name="Chen J."/>
            <person name="Tang J."/>
            <person name="Xie J."/>
            <person name="Liang S."/>
        </authorList>
    </citation>
    <scope>PROTEIN SEQUENCE OF 45-83</scope>
    <scope>SUBCELLULAR LOCATION</scope>
    <scope>MASS SPECTROMETRY</scope>
    <source>
        <tissue>Venom</tissue>
    </source>
</reference>
<feature type="signal peptide" evidence="2">
    <location>
        <begin position="1"/>
        <end position="23"/>
    </location>
</feature>
<feature type="propeptide" id="PRO_0000398400" evidence="3">
    <location>
        <begin position="24"/>
        <end position="44"/>
    </location>
</feature>
<feature type="peptide" id="PRO_0000398401" description="U3-theraphotoxin-Cg1a" evidence="3">
    <location>
        <begin position="45"/>
        <end position="83"/>
    </location>
</feature>
<feature type="disulfide bond" evidence="1">
    <location>
        <begin position="48"/>
        <end position="61"/>
    </location>
</feature>
<feature type="disulfide bond" evidence="1">
    <location>
        <begin position="52"/>
        <end position="75"/>
    </location>
</feature>
<feature type="disulfide bond" evidence="1">
    <location>
        <begin position="69"/>
        <end position="80"/>
    </location>
</feature>
<sequence>MRTFTLIAILTCAVLVIFHAAAAEELEAQDVIETEALATLDEERLFECSFSCDIKKNGKPCKGSGEKKCSGGWRCKMNFCVKV</sequence>
<protein>
    <recommendedName>
        <fullName evidence="5">U3-theraphotoxin-Cg1a</fullName>
        <shortName evidence="5">U3-TRTX-Cg1a</shortName>
    </recommendedName>
    <alternativeName>
        <fullName evidence="5">Jingzhaotoxin-8</fullName>
        <shortName evidence="5">JZTX-8</shortName>
    </alternativeName>
    <alternativeName>
        <fullName evidence="5">Jingzhaotoxin-VIII</fullName>
        <shortName evidence="7">JZTX-VIII</shortName>
    </alternativeName>
    <alternativeName>
        <fullName evidence="4">Peptide F7-12.17</fullName>
    </alternativeName>
</protein>